<organism>
    <name type="scientific">Nostoc sp. (strain PCC 7120 / SAG 25.82 / UTEX 2576)</name>
    <dbReference type="NCBI Taxonomy" id="103690"/>
    <lineage>
        <taxon>Bacteria</taxon>
        <taxon>Bacillati</taxon>
        <taxon>Cyanobacteriota</taxon>
        <taxon>Cyanophyceae</taxon>
        <taxon>Nostocales</taxon>
        <taxon>Nostocaceae</taxon>
        <taxon>Nostoc</taxon>
    </lineage>
</organism>
<sequence length="525" mass="57683">MNTANFPWLTTIILLPIAASLLIPIIPDKDGKTIRWYALTVGLIDFALIVYAFYTSYDFANPDLQLVESYPWVPQLDLNWSVGADGLSMPLIILTGFITTLATLAAWPVTLKPRLFYFLLLAMYGGQIAVFAVQDMLLFFLVWELELIPVYLLLAIWGGKKRQYAATKFILYTAGGSLFILLASLTMAFYGDTVTFDMRSLALKDYALNFQLLLYAGFLIAYAIKLPIIPLHTWLPDAHGEATAPAHMLLAGILLKMGGYALIRMNAGILPDAHAYFAPVLVVLGVVNIIYAALTSFAQRNLKRKIAYSSISHMGFVIIGFASFTDLGLSGAVLQMVSHGLIGASLFFLVGATYDRTHTLMLDEMGGVGKRMPKIFAMFTACSMASLALPGMSGFVAELMVFVGFATSDAYSSTFKVIVVFLMAVGVILTPIYLLSMLREIFYGKENEELVSHQQLIDAEPREVFVIACLLVPIIGIGFYPKLLTQMYDATTVQLTARLRDSVPTLAQEKQEVARVSLSAPVIGN</sequence>
<feature type="chain" id="PRO_0000118033" description="NAD(P)H-quinone oxidoreductase chain 4-2">
    <location>
        <begin position="1"/>
        <end position="525"/>
    </location>
</feature>
<feature type="transmembrane region" description="Helical" evidence="2">
    <location>
        <begin position="6"/>
        <end position="26"/>
    </location>
</feature>
<feature type="transmembrane region" description="Helical" evidence="2">
    <location>
        <begin position="36"/>
        <end position="56"/>
    </location>
</feature>
<feature type="transmembrane region" description="Helical" evidence="2">
    <location>
        <begin position="91"/>
        <end position="111"/>
    </location>
</feature>
<feature type="transmembrane region" description="Helical" evidence="2">
    <location>
        <begin position="115"/>
        <end position="135"/>
    </location>
</feature>
<feature type="transmembrane region" description="Helical" evidence="2">
    <location>
        <begin position="137"/>
        <end position="157"/>
    </location>
</feature>
<feature type="transmembrane region" description="Helical" evidence="2">
    <location>
        <begin position="169"/>
        <end position="189"/>
    </location>
</feature>
<feature type="transmembrane region" description="Helical" evidence="2">
    <location>
        <begin position="212"/>
        <end position="232"/>
    </location>
</feature>
<feature type="transmembrane region" description="Helical" evidence="2">
    <location>
        <begin position="243"/>
        <end position="263"/>
    </location>
</feature>
<feature type="transmembrane region" description="Helical" evidence="2">
    <location>
        <begin position="277"/>
        <end position="297"/>
    </location>
</feature>
<feature type="transmembrane region" description="Helical" evidence="2">
    <location>
        <begin position="314"/>
        <end position="334"/>
    </location>
</feature>
<feature type="transmembrane region" description="Helical" evidence="2">
    <location>
        <begin position="335"/>
        <end position="355"/>
    </location>
</feature>
<feature type="transmembrane region" description="Helical" evidence="2">
    <location>
        <begin position="375"/>
        <end position="397"/>
    </location>
</feature>
<feature type="transmembrane region" description="Helical" evidence="2">
    <location>
        <begin position="417"/>
        <end position="437"/>
    </location>
</feature>
<feature type="transmembrane region" description="Helical" evidence="2">
    <location>
        <begin position="464"/>
        <end position="484"/>
    </location>
</feature>
<name>NU4C2_NOSS1</name>
<accession>Q8YQ78</accession>
<reference key="1">
    <citation type="journal article" date="2001" name="DNA Res.">
        <title>Complete genomic sequence of the filamentous nitrogen-fixing cyanobacterium Anabaena sp. strain PCC 7120.</title>
        <authorList>
            <person name="Kaneko T."/>
            <person name="Nakamura Y."/>
            <person name="Wolk C.P."/>
            <person name="Kuritz T."/>
            <person name="Sasamoto S."/>
            <person name="Watanabe A."/>
            <person name="Iriguchi M."/>
            <person name="Ishikawa A."/>
            <person name="Kawashima K."/>
            <person name="Kimura T."/>
            <person name="Kishida Y."/>
            <person name="Kohara M."/>
            <person name="Matsumoto M."/>
            <person name="Matsuno A."/>
            <person name="Muraki A."/>
            <person name="Nakazaki N."/>
            <person name="Shimpo S."/>
            <person name="Sugimoto M."/>
            <person name="Takazawa M."/>
            <person name="Yamada M."/>
            <person name="Yasuda M."/>
            <person name="Tabata S."/>
        </authorList>
    </citation>
    <scope>NUCLEOTIDE SEQUENCE [LARGE SCALE GENOMIC DNA]</scope>
    <source>
        <strain>PCC 7120 / SAG 25.82 / UTEX 2576</strain>
    </source>
</reference>
<proteinExistence type="inferred from homology"/>
<evidence type="ECO:0000250" key="1"/>
<evidence type="ECO:0000255" key="2"/>
<evidence type="ECO:0000305" key="3"/>
<protein>
    <recommendedName>
        <fullName>NAD(P)H-quinone oxidoreductase chain 4-2</fullName>
        <ecNumber>7.1.1.-</ecNumber>
    </recommendedName>
    <alternativeName>
        <fullName>NAD(P)H dehydrogenase I, subunit D-2</fullName>
    </alternativeName>
    <alternativeName>
        <fullName>NDH-1, chain 4-2</fullName>
    </alternativeName>
</protein>
<keyword id="KW-0472">Membrane</keyword>
<keyword id="KW-0520">NAD</keyword>
<keyword id="KW-0521">NADP</keyword>
<keyword id="KW-0618">Plastoquinone</keyword>
<keyword id="KW-0874">Quinone</keyword>
<keyword id="KW-1185">Reference proteome</keyword>
<keyword id="KW-0793">Thylakoid</keyword>
<keyword id="KW-1278">Translocase</keyword>
<keyword id="KW-0812">Transmembrane</keyword>
<keyword id="KW-1133">Transmembrane helix</keyword>
<gene>
    <name type="primary">ndhD2</name>
    <name type="ordered locus">alr3957</name>
</gene>
<dbReference type="EC" id="7.1.1.-"/>
<dbReference type="EMBL" id="BA000019">
    <property type="protein sequence ID" value="BAB75656.1"/>
    <property type="molecule type" value="Genomic_DNA"/>
</dbReference>
<dbReference type="PIR" id="AF2300">
    <property type="entry name" value="AF2300"/>
</dbReference>
<dbReference type="SMR" id="Q8YQ78"/>
<dbReference type="STRING" id="103690.gene:10495999"/>
<dbReference type="KEGG" id="ana:alr3957"/>
<dbReference type="eggNOG" id="COG1008">
    <property type="taxonomic scope" value="Bacteria"/>
</dbReference>
<dbReference type="OrthoDB" id="416973at2"/>
<dbReference type="Proteomes" id="UP000002483">
    <property type="component" value="Chromosome"/>
</dbReference>
<dbReference type="GO" id="GO:0031676">
    <property type="term" value="C:plasma membrane-derived thylakoid membrane"/>
    <property type="evidence" value="ECO:0007669"/>
    <property type="project" value="UniProtKB-SubCell"/>
</dbReference>
<dbReference type="GO" id="GO:0008137">
    <property type="term" value="F:NADH dehydrogenase (ubiquinone) activity"/>
    <property type="evidence" value="ECO:0007669"/>
    <property type="project" value="InterPro"/>
</dbReference>
<dbReference type="GO" id="GO:0048039">
    <property type="term" value="F:ubiquinone binding"/>
    <property type="evidence" value="ECO:0007669"/>
    <property type="project" value="TreeGrafter"/>
</dbReference>
<dbReference type="GO" id="GO:0042773">
    <property type="term" value="P:ATP synthesis coupled electron transport"/>
    <property type="evidence" value="ECO:0007669"/>
    <property type="project" value="InterPro"/>
</dbReference>
<dbReference type="GO" id="GO:0015990">
    <property type="term" value="P:electron transport coupled proton transport"/>
    <property type="evidence" value="ECO:0007669"/>
    <property type="project" value="TreeGrafter"/>
</dbReference>
<dbReference type="HAMAP" id="MF_00491">
    <property type="entry name" value="NDH1_NuoM"/>
    <property type="match status" value="1"/>
</dbReference>
<dbReference type="InterPro" id="IPR022997">
    <property type="entry name" value="NADH_Q_OxRdtase_chain4"/>
</dbReference>
<dbReference type="InterPro" id="IPR010227">
    <property type="entry name" value="NADH_Q_OxRdtase_chainM/4"/>
</dbReference>
<dbReference type="InterPro" id="IPR003918">
    <property type="entry name" value="NADH_UbQ_OxRdtase"/>
</dbReference>
<dbReference type="InterPro" id="IPR001750">
    <property type="entry name" value="ND/Mrp_TM"/>
</dbReference>
<dbReference type="NCBIfam" id="TIGR01972">
    <property type="entry name" value="NDH_I_M"/>
    <property type="match status" value="1"/>
</dbReference>
<dbReference type="NCBIfam" id="NF002713">
    <property type="entry name" value="PRK02546.1"/>
    <property type="match status" value="1"/>
</dbReference>
<dbReference type="NCBIfam" id="NF009212">
    <property type="entry name" value="PRK12561.1"/>
    <property type="match status" value="1"/>
</dbReference>
<dbReference type="PANTHER" id="PTHR43507:SF21">
    <property type="entry name" value="NAD(P)H-QUINONE OXIDOREDUCTASE CHAIN 4, CHLOROPLASTIC"/>
    <property type="match status" value="1"/>
</dbReference>
<dbReference type="PANTHER" id="PTHR43507">
    <property type="entry name" value="NADH-UBIQUINONE OXIDOREDUCTASE CHAIN 4"/>
    <property type="match status" value="1"/>
</dbReference>
<dbReference type="Pfam" id="PF00361">
    <property type="entry name" value="Proton_antipo_M"/>
    <property type="match status" value="1"/>
</dbReference>
<dbReference type="PRINTS" id="PR01437">
    <property type="entry name" value="NUOXDRDTASE4"/>
</dbReference>
<comment type="function">
    <text evidence="1">NDH-1 shuttles electrons from NAD(P)H, via FMN and iron-sulfur (Fe-S) centers, to quinones in the respiratory chain. The immediate electron acceptor for the enzyme in this species is believed to be plastoquinone. Couples the redox reaction to proton translocation (for every two electrons transferred, four hydrogen ions are translocated across the cytoplasmic membrane), and thus conserves the redox energy in a proton gradient (By similarity).</text>
</comment>
<comment type="catalytic activity">
    <reaction>
        <text>a plastoquinone + NADH + (n+1) H(+)(in) = a plastoquinol + NAD(+) + n H(+)(out)</text>
        <dbReference type="Rhea" id="RHEA:42608"/>
        <dbReference type="Rhea" id="RHEA-COMP:9561"/>
        <dbReference type="Rhea" id="RHEA-COMP:9562"/>
        <dbReference type="ChEBI" id="CHEBI:15378"/>
        <dbReference type="ChEBI" id="CHEBI:17757"/>
        <dbReference type="ChEBI" id="CHEBI:57540"/>
        <dbReference type="ChEBI" id="CHEBI:57945"/>
        <dbReference type="ChEBI" id="CHEBI:62192"/>
    </reaction>
</comment>
<comment type="catalytic activity">
    <reaction>
        <text>a plastoquinone + NADPH + (n+1) H(+)(in) = a plastoquinol + NADP(+) + n H(+)(out)</text>
        <dbReference type="Rhea" id="RHEA:42612"/>
        <dbReference type="Rhea" id="RHEA-COMP:9561"/>
        <dbReference type="Rhea" id="RHEA-COMP:9562"/>
        <dbReference type="ChEBI" id="CHEBI:15378"/>
        <dbReference type="ChEBI" id="CHEBI:17757"/>
        <dbReference type="ChEBI" id="CHEBI:57783"/>
        <dbReference type="ChEBI" id="CHEBI:58349"/>
        <dbReference type="ChEBI" id="CHEBI:62192"/>
    </reaction>
</comment>
<comment type="subcellular location">
    <subcellularLocation>
        <location evidence="1">Cellular thylakoid membrane</location>
        <topology evidence="1">Multi-pass membrane protein</topology>
    </subcellularLocation>
</comment>
<comment type="similarity">
    <text evidence="3">Belongs to the complex I subunit 4 family.</text>
</comment>